<sequence length="68" mass="7391">MAPAAAPSSLAVRASSPAATPTSYGVFCKGLSRTLLAFFELAWQLRMNFPYFYVAGSVILNIRLQVHI</sequence>
<accession>P0DMW3</accession>
<accession>A0A0G2JPJ8</accession>
<gene>
    <name evidence="3" type="primary">SMIM10L1</name>
</gene>
<keyword id="KW-1267">Proteomics identification</keyword>
<keyword id="KW-1185">Reference proteome</keyword>
<proteinExistence type="evidence at protein level"/>
<name>SIML1_HUMAN</name>
<evidence type="ECO:0000256" key="1">
    <source>
        <dbReference type="SAM" id="MobiDB-lite"/>
    </source>
</evidence>
<evidence type="ECO:0000305" key="2"/>
<evidence type="ECO:0000312" key="3">
    <source>
        <dbReference type="HGNC" id="HGNC:49847"/>
    </source>
</evidence>
<protein>
    <recommendedName>
        <fullName evidence="2">Small integral membrane protein 10-like protein 1</fullName>
    </recommendedName>
</protein>
<organism>
    <name type="scientific">Homo sapiens</name>
    <name type="common">Human</name>
    <dbReference type="NCBI Taxonomy" id="9606"/>
    <lineage>
        <taxon>Eukaryota</taxon>
        <taxon>Metazoa</taxon>
        <taxon>Chordata</taxon>
        <taxon>Craniata</taxon>
        <taxon>Vertebrata</taxon>
        <taxon>Euteleostomi</taxon>
        <taxon>Mammalia</taxon>
        <taxon>Eutheria</taxon>
        <taxon>Euarchontoglires</taxon>
        <taxon>Primates</taxon>
        <taxon>Haplorrhini</taxon>
        <taxon>Catarrhini</taxon>
        <taxon>Hominidae</taxon>
        <taxon>Homo</taxon>
    </lineage>
</organism>
<feature type="chain" id="PRO_0000433231" description="Small integral membrane protein 10-like protein 1">
    <location>
        <begin position="1"/>
        <end position="68"/>
    </location>
</feature>
<feature type="region of interest" description="Disordered" evidence="1">
    <location>
        <begin position="1"/>
        <end position="21"/>
    </location>
</feature>
<dbReference type="EMBL" id="AC134349">
    <property type="status" value="NOT_ANNOTATED_CDS"/>
    <property type="molecule type" value="Genomic_DNA"/>
</dbReference>
<dbReference type="CCDS" id="CCDS81667.1"/>
<dbReference type="RefSeq" id="NP_001258521.1">
    <property type="nucleotide sequence ID" value="NM_001271592.2"/>
</dbReference>
<dbReference type="FunCoup" id="P0DMW3">
    <property type="interactions" value="6"/>
</dbReference>
<dbReference type="STRING" id="9606.ENSP00000488907"/>
<dbReference type="GlyGen" id="P0DMW3">
    <property type="glycosylation" value="1 site"/>
</dbReference>
<dbReference type="BioMuta" id="SMIM10L1"/>
<dbReference type="jPOST" id="P0DMW3"/>
<dbReference type="MassIVE" id="P0DMW3"/>
<dbReference type="PeptideAtlas" id="P0DMW3"/>
<dbReference type="Pumba" id="P0DMW3"/>
<dbReference type="DNASU" id="100129361"/>
<dbReference type="Ensembl" id="ENST00000622602.2">
    <property type="protein sequence ID" value="ENSP00000488907.1"/>
    <property type="gene ID" value="ENSG00000256537.5"/>
</dbReference>
<dbReference type="GeneID" id="100129361"/>
<dbReference type="KEGG" id="hsa:100129361"/>
<dbReference type="MANE-Select" id="ENST00000622602.2">
    <property type="protein sequence ID" value="ENSP00000488907.1"/>
    <property type="RefSeq nucleotide sequence ID" value="NM_001271592.2"/>
    <property type="RefSeq protein sequence ID" value="NP_001258521.1"/>
</dbReference>
<dbReference type="AGR" id="HGNC:49847"/>
<dbReference type="CTD" id="100129361"/>
<dbReference type="GeneCards" id="SMIM10L1"/>
<dbReference type="HGNC" id="HGNC:49847">
    <property type="gene designation" value="SMIM10L1"/>
</dbReference>
<dbReference type="HPA" id="ENSG00000256537">
    <property type="expression patterns" value="Low tissue specificity"/>
</dbReference>
<dbReference type="neXtProt" id="NX_P0DMW3"/>
<dbReference type="OpenTargets" id="ENSG00000256537"/>
<dbReference type="VEuPathDB" id="HostDB:ENSG00000256537"/>
<dbReference type="GeneTree" id="ENSGT00390000014547"/>
<dbReference type="InParanoid" id="P0DMW3"/>
<dbReference type="OMA" id="FFDLAWQ"/>
<dbReference type="OrthoDB" id="9619930at2759"/>
<dbReference type="PAN-GO" id="P0DMW3">
    <property type="GO annotations" value="0 GO annotations based on evolutionary models"/>
</dbReference>
<dbReference type="PhylomeDB" id="P0DMW3"/>
<dbReference type="PathwayCommons" id="P0DMW3"/>
<dbReference type="BioGRID-ORCS" id="100129361">
    <property type="hits" value="6 hits in 192 CRISPR screens"/>
</dbReference>
<dbReference type="BioGRID-ORCS" id="644538">
    <property type="hits" value="13 hits in 696 CRISPR screens"/>
</dbReference>
<dbReference type="GenomeRNAi" id="644538"/>
<dbReference type="Pharos" id="P0DMW3">
    <property type="development level" value="Tdark"/>
</dbReference>
<dbReference type="PRO" id="PR:P0DMW3"/>
<dbReference type="Proteomes" id="UP000005640">
    <property type="component" value="Chromosome 12"/>
</dbReference>
<dbReference type="RNAct" id="P0DMW3">
    <property type="molecule type" value="protein"/>
</dbReference>
<dbReference type="Bgee" id="ENSG00000256537">
    <property type="expression patterns" value="Expressed in gastrocnemius and 97 other cell types or tissues"/>
</dbReference>
<dbReference type="GO" id="GO:0005739">
    <property type="term" value="C:mitochondrion"/>
    <property type="evidence" value="ECO:0006056"/>
    <property type="project" value="FlyBase"/>
</dbReference>
<dbReference type="InterPro" id="IPR029367">
    <property type="entry name" value="SMIM10"/>
</dbReference>
<dbReference type="PANTHER" id="PTHR34446">
    <property type="entry name" value="SMALL INTEGRAL MEMBRANE PROTEIN 10"/>
    <property type="match status" value="1"/>
</dbReference>
<dbReference type="PANTHER" id="PTHR34446:SF5">
    <property type="entry name" value="SMALL INTEGRAL MEMBRANE PROTEIN 10-LIKE PROTEIN 1"/>
    <property type="match status" value="1"/>
</dbReference>
<dbReference type="Pfam" id="PF15118">
    <property type="entry name" value="DUF4560"/>
    <property type="match status" value="1"/>
</dbReference>
<reference key="1">
    <citation type="journal article" date="2006" name="Nature">
        <title>The finished DNA sequence of human chromosome 12.</title>
        <authorList>
            <person name="Scherer S.E."/>
            <person name="Muzny D.M."/>
            <person name="Buhay C.J."/>
            <person name="Chen R."/>
            <person name="Cree A."/>
            <person name="Ding Y."/>
            <person name="Dugan-Rocha S."/>
            <person name="Gill R."/>
            <person name="Gunaratne P."/>
            <person name="Harris R.A."/>
            <person name="Hawes A.C."/>
            <person name="Hernandez J."/>
            <person name="Hodgson A.V."/>
            <person name="Hume J."/>
            <person name="Jackson A."/>
            <person name="Khan Z.M."/>
            <person name="Kovar-Smith C."/>
            <person name="Lewis L.R."/>
            <person name="Lozado R.J."/>
            <person name="Metzker M.L."/>
            <person name="Milosavljevic A."/>
            <person name="Miner G.R."/>
            <person name="Montgomery K.T."/>
            <person name="Morgan M.B."/>
            <person name="Nazareth L.V."/>
            <person name="Scott G."/>
            <person name="Sodergren E."/>
            <person name="Song X.-Z."/>
            <person name="Steffen D."/>
            <person name="Lovering R.C."/>
            <person name="Wheeler D.A."/>
            <person name="Worley K.C."/>
            <person name="Yuan Y."/>
            <person name="Zhang Z."/>
            <person name="Adams C.Q."/>
            <person name="Ansari-Lari M.A."/>
            <person name="Ayele M."/>
            <person name="Brown M.J."/>
            <person name="Chen G."/>
            <person name="Chen Z."/>
            <person name="Clerc-Blankenburg K.P."/>
            <person name="Davis C."/>
            <person name="Delgado O."/>
            <person name="Dinh H.H."/>
            <person name="Draper H."/>
            <person name="Gonzalez-Garay M.L."/>
            <person name="Havlak P."/>
            <person name="Jackson L.R."/>
            <person name="Jacob L.S."/>
            <person name="Kelly S.H."/>
            <person name="Li L."/>
            <person name="Li Z."/>
            <person name="Liu J."/>
            <person name="Liu W."/>
            <person name="Lu J."/>
            <person name="Maheshwari M."/>
            <person name="Nguyen B.-V."/>
            <person name="Okwuonu G.O."/>
            <person name="Pasternak S."/>
            <person name="Perez L.M."/>
            <person name="Plopper F.J.H."/>
            <person name="Santibanez J."/>
            <person name="Shen H."/>
            <person name="Tabor P.E."/>
            <person name="Verduzco D."/>
            <person name="Waldron L."/>
            <person name="Wang Q."/>
            <person name="Williams G.A."/>
            <person name="Zhang J."/>
            <person name="Zhou J."/>
            <person name="Allen C.C."/>
            <person name="Amin A.G."/>
            <person name="Anyalebechi V."/>
            <person name="Bailey M."/>
            <person name="Barbaria J.A."/>
            <person name="Bimage K.E."/>
            <person name="Bryant N.P."/>
            <person name="Burch P.E."/>
            <person name="Burkett C.E."/>
            <person name="Burrell K.L."/>
            <person name="Calderon E."/>
            <person name="Cardenas V."/>
            <person name="Carter K."/>
            <person name="Casias K."/>
            <person name="Cavazos I."/>
            <person name="Cavazos S.R."/>
            <person name="Ceasar H."/>
            <person name="Chacko J."/>
            <person name="Chan S.N."/>
            <person name="Chavez D."/>
            <person name="Christopoulos C."/>
            <person name="Chu J."/>
            <person name="Cockrell R."/>
            <person name="Cox C.D."/>
            <person name="Dang M."/>
            <person name="Dathorne S.R."/>
            <person name="David R."/>
            <person name="Davis C.M."/>
            <person name="Davy-Carroll L."/>
            <person name="Deshazo D.R."/>
            <person name="Donlin J.E."/>
            <person name="D'Souza L."/>
            <person name="Eaves K.A."/>
            <person name="Egan A."/>
            <person name="Emery-Cohen A.J."/>
            <person name="Escotto M."/>
            <person name="Flagg N."/>
            <person name="Forbes L.D."/>
            <person name="Gabisi A.M."/>
            <person name="Garza M."/>
            <person name="Hamilton C."/>
            <person name="Henderson N."/>
            <person name="Hernandez O."/>
            <person name="Hines S."/>
            <person name="Hogues M.E."/>
            <person name="Huang M."/>
            <person name="Idlebird D.G."/>
            <person name="Johnson R."/>
            <person name="Jolivet A."/>
            <person name="Jones S."/>
            <person name="Kagan R."/>
            <person name="King L.M."/>
            <person name="Leal B."/>
            <person name="Lebow H."/>
            <person name="Lee S."/>
            <person name="LeVan J.M."/>
            <person name="Lewis L.C."/>
            <person name="London P."/>
            <person name="Lorensuhewa L.M."/>
            <person name="Loulseged H."/>
            <person name="Lovett D.A."/>
            <person name="Lucier A."/>
            <person name="Lucier R.L."/>
            <person name="Ma J."/>
            <person name="Madu R.C."/>
            <person name="Mapua P."/>
            <person name="Martindale A.D."/>
            <person name="Martinez E."/>
            <person name="Massey E."/>
            <person name="Mawhiney S."/>
            <person name="Meador M.G."/>
            <person name="Mendez S."/>
            <person name="Mercado C."/>
            <person name="Mercado I.C."/>
            <person name="Merritt C.E."/>
            <person name="Miner Z.L."/>
            <person name="Minja E."/>
            <person name="Mitchell T."/>
            <person name="Mohabbat F."/>
            <person name="Mohabbat K."/>
            <person name="Montgomery B."/>
            <person name="Moore N."/>
            <person name="Morris S."/>
            <person name="Munidasa M."/>
            <person name="Ngo R.N."/>
            <person name="Nguyen N.B."/>
            <person name="Nickerson E."/>
            <person name="Nwaokelemeh O.O."/>
            <person name="Nwokenkwo S."/>
            <person name="Obregon M."/>
            <person name="Oguh M."/>
            <person name="Oragunye N."/>
            <person name="Oviedo R.J."/>
            <person name="Parish B.J."/>
            <person name="Parker D.N."/>
            <person name="Parrish J."/>
            <person name="Parks K.L."/>
            <person name="Paul H.A."/>
            <person name="Payton B.A."/>
            <person name="Perez A."/>
            <person name="Perrin W."/>
            <person name="Pickens A."/>
            <person name="Primus E.L."/>
            <person name="Pu L.-L."/>
            <person name="Puazo M."/>
            <person name="Quiles M.M."/>
            <person name="Quiroz J.B."/>
            <person name="Rabata D."/>
            <person name="Reeves K."/>
            <person name="Ruiz S.J."/>
            <person name="Shao H."/>
            <person name="Sisson I."/>
            <person name="Sonaike T."/>
            <person name="Sorelle R.P."/>
            <person name="Sutton A.E."/>
            <person name="Svatek A.F."/>
            <person name="Svetz L.A."/>
            <person name="Tamerisa K.S."/>
            <person name="Taylor T.R."/>
            <person name="Teague B."/>
            <person name="Thomas N."/>
            <person name="Thorn R.D."/>
            <person name="Trejos Z.Y."/>
            <person name="Trevino B.K."/>
            <person name="Ukegbu O.N."/>
            <person name="Urban J.B."/>
            <person name="Vasquez L.I."/>
            <person name="Vera V.A."/>
            <person name="Villasana D.M."/>
            <person name="Wang L."/>
            <person name="Ward-Moore S."/>
            <person name="Warren J.T."/>
            <person name="Wei X."/>
            <person name="White F."/>
            <person name="Williamson A.L."/>
            <person name="Wleczyk R."/>
            <person name="Wooden H.S."/>
            <person name="Wooden S.H."/>
            <person name="Yen J."/>
            <person name="Yoon L."/>
            <person name="Yoon V."/>
            <person name="Zorrilla S.E."/>
            <person name="Nelson D."/>
            <person name="Kucherlapati R."/>
            <person name="Weinstock G."/>
            <person name="Gibbs R.A."/>
        </authorList>
    </citation>
    <scope>NUCLEOTIDE SEQUENCE [LARGE SCALE GENOMIC DNA]</scope>
</reference>